<proteinExistence type="inferred from homology"/>
<sequence>MSSQIKLTKNSYRAEKQKLNMLGMYLPTLKLKKALLQAEVQSAIRLAAESTATNEQARDRMYAFAELFSIPLYTDAVEQCFSVDILEKDVENIAGVEVPLLKRVVLTSPEYSLLDTPIWLDSLLASVKEYVVSKIYAENAQERLLLLEEELRRVSIRVNLFEKKLIPTTSQTLKKIAIFLSDRSITDVGQMKMAKKKIQQHKE</sequence>
<accession>B0BBT7</accession>
<protein>
    <recommendedName>
        <fullName evidence="1">V-type ATP synthase subunit D</fullName>
    </recommendedName>
    <alternativeName>
        <fullName evidence="1">V-ATPase subunit D</fullName>
    </alternativeName>
</protein>
<evidence type="ECO:0000255" key="1">
    <source>
        <dbReference type="HAMAP-Rule" id="MF_00271"/>
    </source>
</evidence>
<reference key="1">
    <citation type="journal article" date="2008" name="Genome Res.">
        <title>Chlamydia trachomatis: genome sequence analysis of lymphogranuloma venereum isolates.</title>
        <authorList>
            <person name="Thomson N.R."/>
            <person name="Holden M.T.G."/>
            <person name="Carder C."/>
            <person name="Lennard N."/>
            <person name="Lockey S.J."/>
            <person name="Marsh P."/>
            <person name="Skipp P."/>
            <person name="O'Connor C.D."/>
            <person name="Goodhead I."/>
            <person name="Norbertzcak H."/>
            <person name="Harris B."/>
            <person name="Ormond D."/>
            <person name="Rance R."/>
            <person name="Quail M.A."/>
            <person name="Parkhill J."/>
            <person name="Stephens R.S."/>
            <person name="Clarke I.N."/>
        </authorList>
    </citation>
    <scope>NUCLEOTIDE SEQUENCE [LARGE SCALE GENOMIC DNA]</scope>
    <source>
        <strain>UCH-1/proctitis</strain>
    </source>
</reference>
<feature type="chain" id="PRO_1000114475" description="V-type ATP synthase subunit D">
    <location>
        <begin position="1"/>
        <end position="203"/>
    </location>
</feature>
<organism>
    <name type="scientific">Chlamydia trachomatis serovar L2b (strain UCH-1/proctitis)</name>
    <dbReference type="NCBI Taxonomy" id="471473"/>
    <lineage>
        <taxon>Bacteria</taxon>
        <taxon>Pseudomonadati</taxon>
        <taxon>Chlamydiota</taxon>
        <taxon>Chlamydiia</taxon>
        <taxon>Chlamydiales</taxon>
        <taxon>Chlamydiaceae</taxon>
        <taxon>Chlamydia/Chlamydophila group</taxon>
        <taxon>Chlamydia</taxon>
    </lineage>
</organism>
<dbReference type="EMBL" id="AM884177">
    <property type="protein sequence ID" value="CAP06952.1"/>
    <property type="molecule type" value="Genomic_DNA"/>
</dbReference>
<dbReference type="RefSeq" id="WP_009871653.1">
    <property type="nucleotide sequence ID" value="NC_010280.2"/>
</dbReference>
<dbReference type="SMR" id="B0BBT7"/>
<dbReference type="KEGG" id="ctl:CTLon_0554"/>
<dbReference type="HOGENOM" id="CLU_113661_0_0_0"/>
<dbReference type="Proteomes" id="UP001154401">
    <property type="component" value="Chromosome"/>
</dbReference>
<dbReference type="GO" id="GO:0005524">
    <property type="term" value="F:ATP binding"/>
    <property type="evidence" value="ECO:0007669"/>
    <property type="project" value="UniProtKB-UniRule"/>
</dbReference>
<dbReference type="GO" id="GO:0046933">
    <property type="term" value="F:proton-transporting ATP synthase activity, rotational mechanism"/>
    <property type="evidence" value="ECO:0007669"/>
    <property type="project" value="UniProtKB-UniRule"/>
</dbReference>
<dbReference type="GO" id="GO:0046961">
    <property type="term" value="F:proton-transporting ATPase activity, rotational mechanism"/>
    <property type="evidence" value="ECO:0007669"/>
    <property type="project" value="InterPro"/>
</dbReference>
<dbReference type="GO" id="GO:0042777">
    <property type="term" value="P:proton motive force-driven plasma membrane ATP synthesis"/>
    <property type="evidence" value="ECO:0007669"/>
    <property type="project" value="UniProtKB-UniRule"/>
</dbReference>
<dbReference type="FunFam" id="1.10.287.3240:FF:000014">
    <property type="entry name" value="V-type ATP synthase subunit D"/>
    <property type="match status" value="1"/>
</dbReference>
<dbReference type="Gene3D" id="1.10.287.3240">
    <property type="match status" value="1"/>
</dbReference>
<dbReference type="HAMAP" id="MF_00271">
    <property type="entry name" value="ATP_synth_D_arch"/>
    <property type="match status" value="1"/>
</dbReference>
<dbReference type="InterPro" id="IPR002699">
    <property type="entry name" value="V_ATPase_D"/>
</dbReference>
<dbReference type="NCBIfam" id="NF002565">
    <property type="entry name" value="PRK02195.1"/>
    <property type="match status" value="1"/>
</dbReference>
<dbReference type="NCBIfam" id="TIGR00309">
    <property type="entry name" value="V_ATPase_subD"/>
    <property type="match status" value="1"/>
</dbReference>
<dbReference type="PANTHER" id="PTHR11671">
    <property type="entry name" value="V-TYPE ATP SYNTHASE SUBUNIT D"/>
    <property type="match status" value="1"/>
</dbReference>
<dbReference type="Pfam" id="PF01813">
    <property type="entry name" value="ATP-synt_D"/>
    <property type="match status" value="1"/>
</dbReference>
<comment type="function">
    <text evidence="1">Produces ATP from ADP in the presence of a proton gradient across the membrane.</text>
</comment>
<comment type="similarity">
    <text evidence="1">Belongs to the V-ATPase D subunit family.</text>
</comment>
<name>VATD_CHLTB</name>
<gene>
    <name evidence="1" type="primary">atpD</name>
    <name type="ordered locus">CTLon_0554</name>
</gene>
<keyword id="KW-0066">ATP synthesis</keyword>
<keyword id="KW-0375">Hydrogen ion transport</keyword>
<keyword id="KW-0406">Ion transport</keyword>
<keyword id="KW-0813">Transport</keyword>